<keyword id="KW-0238">DNA-binding</keyword>
<keyword id="KW-0255">Endonuclease</keyword>
<keyword id="KW-0378">Hydrolase</keyword>
<keyword id="KW-0460">Magnesium</keyword>
<keyword id="KW-0479">Metal-binding</keyword>
<keyword id="KW-0540">Nuclease</keyword>
<keyword id="KW-0630">Potassium</keyword>
<evidence type="ECO:0000250" key="1"/>
<evidence type="ECO:0000305" key="2"/>
<dbReference type="EC" id="3.1.-.-"/>
<dbReference type="EMBL" id="CP000901">
    <property type="protein sequence ID" value="ABX88088.1"/>
    <property type="molecule type" value="Genomic_DNA"/>
</dbReference>
<dbReference type="SMR" id="A9R2J1"/>
<dbReference type="KEGG" id="ypg:YpAngola_A3155"/>
<dbReference type="PATRIC" id="fig|349746.12.peg.4214"/>
<dbReference type="GO" id="GO:0008409">
    <property type="term" value="F:5'-3' exonuclease activity"/>
    <property type="evidence" value="ECO:0007669"/>
    <property type="project" value="InterPro"/>
</dbReference>
<dbReference type="GO" id="GO:0017108">
    <property type="term" value="F:5'-flap endonuclease activity"/>
    <property type="evidence" value="ECO:0007669"/>
    <property type="project" value="InterPro"/>
</dbReference>
<dbReference type="GO" id="GO:0003677">
    <property type="term" value="F:DNA binding"/>
    <property type="evidence" value="ECO:0007669"/>
    <property type="project" value="UniProtKB-KW"/>
</dbReference>
<dbReference type="GO" id="GO:0046872">
    <property type="term" value="F:metal ion binding"/>
    <property type="evidence" value="ECO:0007669"/>
    <property type="project" value="UniProtKB-KW"/>
</dbReference>
<dbReference type="GO" id="GO:0033567">
    <property type="term" value="P:DNA replication, Okazaki fragment processing"/>
    <property type="evidence" value="ECO:0007669"/>
    <property type="project" value="InterPro"/>
</dbReference>
<dbReference type="CDD" id="cd09898">
    <property type="entry name" value="H3TH_53EXO"/>
    <property type="match status" value="1"/>
</dbReference>
<dbReference type="CDD" id="cd09859">
    <property type="entry name" value="PIN_53EXO"/>
    <property type="match status" value="1"/>
</dbReference>
<dbReference type="FunFam" id="3.40.50.1010:FF:000011">
    <property type="entry name" value="Flap endonuclease Xni"/>
    <property type="match status" value="1"/>
</dbReference>
<dbReference type="Gene3D" id="1.10.150.20">
    <property type="entry name" value="5' to 3' exonuclease, C-terminal subdomain"/>
    <property type="match status" value="1"/>
</dbReference>
<dbReference type="Gene3D" id="3.40.50.1010">
    <property type="entry name" value="5'-nuclease"/>
    <property type="match status" value="1"/>
</dbReference>
<dbReference type="InterPro" id="IPR020046">
    <property type="entry name" value="5-3_exonucl_a-hlix_arch_N"/>
</dbReference>
<dbReference type="InterPro" id="IPR002421">
    <property type="entry name" value="5-3_exonuclease"/>
</dbReference>
<dbReference type="InterPro" id="IPR036279">
    <property type="entry name" value="5-3_exonuclease_C_sf"/>
</dbReference>
<dbReference type="InterPro" id="IPR020045">
    <property type="entry name" value="DNA_polI_H3TH"/>
</dbReference>
<dbReference type="InterPro" id="IPR038969">
    <property type="entry name" value="FEN"/>
</dbReference>
<dbReference type="InterPro" id="IPR008918">
    <property type="entry name" value="HhH2"/>
</dbReference>
<dbReference type="InterPro" id="IPR029060">
    <property type="entry name" value="PIN-like_dom_sf"/>
</dbReference>
<dbReference type="NCBIfam" id="NF007017">
    <property type="entry name" value="PRK09482.1"/>
    <property type="match status" value="1"/>
</dbReference>
<dbReference type="PANTHER" id="PTHR42646:SF2">
    <property type="entry name" value="5'-3' EXONUCLEASE FAMILY PROTEIN"/>
    <property type="match status" value="1"/>
</dbReference>
<dbReference type="PANTHER" id="PTHR42646">
    <property type="entry name" value="FLAP ENDONUCLEASE XNI"/>
    <property type="match status" value="1"/>
</dbReference>
<dbReference type="Pfam" id="PF01367">
    <property type="entry name" value="5_3_exonuc"/>
    <property type="match status" value="1"/>
</dbReference>
<dbReference type="Pfam" id="PF02739">
    <property type="entry name" value="5_3_exonuc_N"/>
    <property type="match status" value="1"/>
</dbReference>
<dbReference type="SMART" id="SM00475">
    <property type="entry name" value="53EXOc"/>
    <property type="match status" value="1"/>
</dbReference>
<dbReference type="SMART" id="SM00279">
    <property type="entry name" value="HhH2"/>
    <property type="match status" value="1"/>
</dbReference>
<dbReference type="SUPFAM" id="SSF47807">
    <property type="entry name" value="5' to 3' exonuclease, C-terminal subdomain"/>
    <property type="match status" value="1"/>
</dbReference>
<dbReference type="SUPFAM" id="SSF88723">
    <property type="entry name" value="PIN domain-like"/>
    <property type="match status" value="1"/>
</dbReference>
<reference key="1">
    <citation type="journal article" date="2010" name="J. Bacteriol.">
        <title>Genome sequence of the deep-rooted Yersinia pestis strain Angola reveals new insights into the evolution and pangenome of the plague bacterium.</title>
        <authorList>
            <person name="Eppinger M."/>
            <person name="Worsham P.L."/>
            <person name="Nikolich M.P."/>
            <person name="Riley D.R."/>
            <person name="Sebastian Y."/>
            <person name="Mou S."/>
            <person name="Achtman M."/>
            <person name="Lindler L.E."/>
            <person name="Ravel J."/>
        </authorList>
    </citation>
    <scope>NUCLEOTIDE SEQUENCE [LARGE SCALE GENOMIC DNA]</scope>
    <source>
        <strain>Angola</strain>
    </source>
</reference>
<protein>
    <recommendedName>
        <fullName>Flap endonuclease Xni</fullName>
        <shortName>FEN</shortName>
        <ecNumber>3.1.-.-</ecNumber>
    </recommendedName>
</protein>
<gene>
    <name type="primary">xni</name>
    <name type="synonym">ygdG</name>
    <name type="ordered locus">YpAngola_A3155</name>
</gene>
<accession>A9R2J1</accession>
<comment type="function">
    <text evidence="1">Has flap endonuclease activity. During DNA replication, flap endonucleases cleave the 5'-overhanging flap structure that is generated by displacement synthesis when DNA polymerase encounters the 5'-end of a downstream Okazaki fragment (By similarity).</text>
</comment>
<comment type="cofactor">
    <cofactor evidence="1">
        <name>Mg(2+)</name>
        <dbReference type="ChEBI" id="CHEBI:18420"/>
    </cofactor>
    <text evidence="1">Binds 2 Mg(2+) per subunit. Only one magnesium ion has a direct interaction with the protein, the other interactions are indirect.</text>
</comment>
<comment type="cofactor">
    <cofactor evidence="1">
        <name>K(+)</name>
        <dbReference type="ChEBI" id="CHEBI:29103"/>
    </cofactor>
    <text evidence="1">Binds 1 K(+) per subunit. The potassium ion strongly increases the affinity for DNA.</text>
</comment>
<comment type="similarity">
    <text evidence="2">Belongs to the Xni family.</text>
</comment>
<sequence length="218" mass="24134">MQIHLLIVDALNLIRRIHAVQGSPCVKACQHALQQLIQHSQPSHAVAVFDEDDRSDSWRHQCLPDYKAGRSPMPDNLQQEMPLIRQAFNELGVACWHSPGNEADDLAATLVVKVAGAGHQVTIVSTDKGYCQLLAPNIQIRDYFQKRWLDMPFVKQEFGVLPRQLPDYWGLAGISSSKIPGVAGVGAKTATLLLQQADTCNERCNSDPHPTPEIRSRG</sequence>
<feature type="chain" id="PRO_0000389452" description="Flap endonuclease Xni">
    <location>
        <begin position="1"/>
        <end position="218"/>
    </location>
</feature>
<feature type="region of interest" description="Interaction with DNA" evidence="1">
    <location>
        <begin position="184"/>
        <end position="189"/>
    </location>
</feature>
<feature type="binding site" evidence="1">
    <location>
        <position position="104"/>
    </location>
    <ligand>
        <name>Mg(2+)</name>
        <dbReference type="ChEBI" id="CHEBI:18420"/>
    </ligand>
</feature>
<feature type="binding site" evidence="1">
    <location>
        <position position="171"/>
    </location>
    <ligand>
        <name>K(+)</name>
        <dbReference type="ChEBI" id="CHEBI:29103"/>
    </ligand>
</feature>
<feature type="binding site" evidence="1">
    <location>
        <position position="172"/>
    </location>
    <ligand>
        <name>K(+)</name>
        <dbReference type="ChEBI" id="CHEBI:29103"/>
    </ligand>
</feature>
<feature type="binding site" evidence="1">
    <location>
        <position position="180"/>
    </location>
    <ligand>
        <name>K(+)</name>
        <dbReference type="ChEBI" id="CHEBI:29103"/>
    </ligand>
</feature>
<feature type="binding site" evidence="1">
    <location>
        <position position="182"/>
    </location>
    <ligand>
        <name>K(+)</name>
        <dbReference type="ChEBI" id="CHEBI:29103"/>
    </ligand>
</feature>
<feature type="binding site" evidence="1">
    <location>
        <position position="185"/>
    </location>
    <ligand>
        <name>K(+)</name>
        <dbReference type="ChEBI" id="CHEBI:29103"/>
    </ligand>
</feature>
<proteinExistence type="inferred from homology"/>
<name>XNI_YERPG</name>
<organism>
    <name type="scientific">Yersinia pestis bv. Antiqua (strain Angola)</name>
    <dbReference type="NCBI Taxonomy" id="349746"/>
    <lineage>
        <taxon>Bacteria</taxon>
        <taxon>Pseudomonadati</taxon>
        <taxon>Pseudomonadota</taxon>
        <taxon>Gammaproteobacteria</taxon>
        <taxon>Enterobacterales</taxon>
        <taxon>Yersiniaceae</taxon>
        <taxon>Yersinia</taxon>
    </lineage>
</organism>